<sequence length="225" mass="25521">MMYHIPGVLSPQDVAHFREQLEQAEWVDGRVTTGAQGAQVKNNQQVDTRSALYAALQNEVLNAVNQHALFFAAALPRTLSTPLFNRYQNNETYGFHVDGAVRSHPQNGWMRTDLSATLFLSDPQSYDGGELVVNDTFGQHRVKLPAGDLVLYPSSSLHCVTPVTRGVRVASFMWIQSMIRDDKKRAMLFELDKNIQSLKSRYGENEEILSLLNLYHNLLREWSEI</sequence>
<evidence type="ECO:0000255" key="1">
    <source>
        <dbReference type="HAMAP-Rule" id="MF_00657"/>
    </source>
</evidence>
<evidence type="ECO:0000305" key="2"/>
<protein>
    <recommendedName>
        <fullName evidence="1">PKHD-type hydroxylase YbiX</fullName>
        <ecNumber evidence="1">1.14.11.-</ecNumber>
    </recommendedName>
</protein>
<dbReference type="EC" id="1.14.11.-" evidence="1"/>
<dbReference type="EMBL" id="AE005674">
    <property type="protein sequence ID" value="AAN42389.1"/>
    <property type="status" value="ALT_INIT"/>
    <property type="molecule type" value="Genomic_DNA"/>
</dbReference>
<dbReference type="EMBL" id="AE014073">
    <property type="protein sequence ID" value="AAP16266.1"/>
    <property type="status" value="ALT_INIT"/>
    <property type="molecule type" value="Genomic_DNA"/>
</dbReference>
<dbReference type="RefSeq" id="NP_706682.3">
    <property type="nucleotide sequence ID" value="NC_004337.2"/>
</dbReference>
<dbReference type="RefSeq" id="WP_000990151.1">
    <property type="nucleotide sequence ID" value="NZ_WPGW01000030.1"/>
</dbReference>
<dbReference type="SMR" id="P59728"/>
<dbReference type="STRING" id="198214.SF0754"/>
<dbReference type="PaxDb" id="198214-SF0754"/>
<dbReference type="GeneID" id="1023754"/>
<dbReference type="KEGG" id="sfl:SF0754"/>
<dbReference type="KEGG" id="sfx:S0795"/>
<dbReference type="PATRIC" id="fig|198214.7.peg.875"/>
<dbReference type="HOGENOM" id="CLU_106663_0_0_6"/>
<dbReference type="Proteomes" id="UP000001006">
    <property type="component" value="Chromosome"/>
</dbReference>
<dbReference type="Proteomes" id="UP000002673">
    <property type="component" value="Chromosome"/>
</dbReference>
<dbReference type="GO" id="GO:0016706">
    <property type="term" value="F:2-oxoglutarate-dependent dioxygenase activity"/>
    <property type="evidence" value="ECO:0007669"/>
    <property type="project" value="UniProtKB-UniRule"/>
</dbReference>
<dbReference type="GO" id="GO:0005506">
    <property type="term" value="F:iron ion binding"/>
    <property type="evidence" value="ECO:0007669"/>
    <property type="project" value="UniProtKB-UniRule"/>
</dbReference>
<dbReference type="GO" id="GO:0031418">
    <property type="term" value="F:L-ascorbic acid binding"/>
    <property type="evidence" value="ECO:0007669"/>
    <property type="project" value="UniProtKB-KW"/>
</dbReference>
<dbReference type="GO" id="GO:0006974">
    <property type="term" value="P:DNA damage response"/>
    <property type="evidence" value="ECO:0007669"/>
    <property type="project" value="TreeGrafter"/>
</dbReference>
<dbReference type="GO" id="GO:0006879">
    <property type="term" value="P:intracellular iron ion homeostasis"/>
    <property type="evidence" value="ECO:0007669"/>
    <property type="project" value="TreeGrafter"/>
</dbReference>
<dbReference type="FunFam" id="2.60.120.620:FF:000006">
    <property type="entry name" value="PKHD-type hydroxylase YbiX"/>
    <property type="match status" value="1"/>
</dbReference>
<dbReference type="FunFam" id="4.10.860.20:FF:000001">
    <property type="entry name" value="PKHD-type hydroxylase YbiX"/>
    <property type="match status" value="1"/>
</dbReference>
<dbReference type="Gene3D" id="2.60.120.620">
    <property type="entry name" value="q2cbj1_9rhob like domain"/>
    <property type="match status" value="1"/>
</dbReference>
<dbReference type="Gene3D" id="4.10.860.20">
    <property type="entry name" value="Rabenosyn, Rab binding domain"/>
    <property type="match status" value="1"/>
</dbReference>
<dbReference type="HAMAP" id="MF_00657">
    <property type="entry name" value="Hydroxyl_YbiX"/>
    <property type="match status" value="1"/>
</dbReference>
<dbReference type="InterPro" id="IPR005123">
    <property type="entry name" value="Oxoglu/Fe-dep_dioxygenase_dom"/>
</dbReference>
<dbReference type="InterPro" id="IPR041097">
    <property type="entry name" value="PKHD_C"/>
</dbReference>
<dbReference type="InterPro" id="IPR023550">
    <property type="entry name" value="PKHD_hydroxylase"/>
</dbReference>
<dbReference type="InterPro" id="IPR006620">
    <property type="entry name" value="Pro_4_hyd_alph"/>
</dbReference>
<dbReference type="InterPro" id="IPR044862">
    <property type="entry name" value="Pro_4_hyd_alph_FE2OG_OXY"/>
</dbReference>
<dbReference type="NCBIfam" id="NF003972">
    <property type="entry name" value="PRK05467.1-1"/>
    <property type="match status" value="1"/>
</dbReference>
<dbReference type="NCBIfam" id="NF003974">
    <property type="entry name" value="PRK05467.1-3"/>
    <property type="match status" value="1"/>
</dbReference>
<dbReference type="NCBIfam" id="NF003975">
    <property type="entry name" value="PRK05467.1-4"/>
    <property type="match status" value="1"/>
</dbReference>
<dbReference type="PANTHER" id="PTHR41536">
    <property type="entry name" value="PKHD-TYPE HYDROXYLASE YBIX"/>
    <property type="match status" value="1"/>
</dbReference>
<dbReference type="PANTHER" id="PTHR41536:SF1">
    <property type="entry name" value="PKHD-TYPE HYDROXYLASE YBIX"/>
    <property type="match status" value="1"/>
</dbReference>
<dbReference type="Pfam" id="PF13640">
    <property type="entry name" value="2OG-FeII_Oxy_3"/>
    <property type="match status" value="1"/>
</dbReference>
<dbReference type="Pfam" id="PF18331">
    <property type="entry name" value="PKHD_C"/>
    <property type="match status" value="1"/>
</dbReference>
<dbReference type="SMART" id="SM00702">
    <property type="entry name" value="P4Hc"/>
    <property type="match status" value="1"/>
</dbReference>
<dbReference type="SUPFAM" id="SSF51197">
    <property type="entry name" value="Clavaminate synthase-like"/>
    <property type="match status" value="1"/>
</dbReference>
<dbReference type="PROSITE" id="PS51471">
    <property type="entry name" value="FE2OG_OXY"/>
    <property type="match status" value="1"/>
</dbReference>
<gene>
    <name evidence="1" type="primary">ybiX</name>
    <name type="ordered locus">SF0753.1</name>
    <name type="ordered locus">S0795</name>
</gene>
<feature type="chain" id="PRO_0000206683" description="PKHD-type hydroxylase YbiX">
    <location>
        <begin position="1"/>
        <end position="225"/>
    </location>
</feature>
<feature type="domain" description="Fe2OG dioxygenase" evidence="1">
    <location>
        <begin position="78"/>
        <end position="177"/>
    </location>
</feature>
<feature type="binding site" evidence="1">
    <location>
        <position position="96"/>
    </location>
    <ligand>
        <name>Fe cation</name>
        <dbReference type="ChEBI" id="CHEBI:24875"/>
    </ligand>
</feature>
<feature type="binding site" evidence="1">
    <location>
        <position position="98"/>
    </location>
    <ligand>
        <name>Fe cation</name>
        <dbReference type="ChEBI" id="CHEBI:24875"/>
    </ligand>
</feature>
<feature type="binding site" evidence="1">
    <location>
        <position position="158"/>
    </location>
    <ligand>
        <name>Fe cation</name>
        <dbReference type="ChEBI" id="CHEBI:24875"/>
    </ligand>
</feature>
<feature type="binding site" evidence="1">
    <location>
        <position position="168"/>
    </location>
    <ligand>
        <name>2-oxoglutarate</name>
        <dbReference type="ChEBI" id="CHEBI:16810"/>
    </ligand>
</feature>
<accession>P59728</accession>
<keyword id="KW-0223">Dioxygenase</keyword>
<keyword id="KW-0408">Iron</keyword>
<keyword id="KW-0479">Metal-binding</keyword>
<keyword id="KW-0560">Oxidoreductase</keyword>
<keyword id="KW-1185">Reference proteome</keyword>
<keyword id="KW-0847">Vitamin C</keyword>
<organism>
    <name type="scientific">Shigella flexneri</name>
    <dbReference type="NCBI Taxonomy" id="623"/>
    <lineage>
        <taxon>Bacteria</taxon>
        <taxon>Pseudomonadati</taxon>
        <taxon>Pseudomonadota</taxon>
        <taxon>Gammaproteobacteria</taxon>
        <taxon>Enterobacterales</taxon>
        <taxon>Enterobacteriaceae</taxon>
        <taxon>Shigella</taxon>
    </lineage>
</organism>
<proteinExistence type="inferred from homology"/>
<comment type="cofactor">
    <cofactor evidence="1">
        <name>Fe(2+)</name>
        <dbReference type="ChEBI" id="CHEBI:29033"/>
    </cofactor>
    <text evidence="1">Binds 1 Fe(2+) ion per subunit.</text>
</comment>
<comment type="cofactor">
    <cofactor evidence="1">
        <name>L-ascorbate</name>
        <dbReference type="ChEBI" id="CHEBI:38290"/>
    </cofactor>
</comment>
<comment type="sequence caution" evidence="2">
    <conflict type="erroneous initiation">
        <sequence resource="EMBL-CDS" id="AAN42389"/>
    </conflict>
</comment>
<comment type="sequence caution" evidence="2">
    <conflict type="erroneous initiation">
        <sequence resource="EMBL-CDS" id="AAP16266"/>
    </conflict>
</comment>
<reference key="1">
    <citation type="journal article" date="2002" name="Nucleic Acids Res.">
        <title>Genome sequence of Shigella flexneri 2a: insights into pathogenicity through comparison with genomes of Escherichia coli K12 and O157.</title>
        <authorList>
            <person name="Jin Q."/>
            <person name="Yuan Z."/>
            <person name="Xu J."/>
            <person name="Wang Y."/>
            <person name="Shen Y."/>
            <person name="Lu W."/>
            <person name="Wang J."/>
            <person name="Liu H."/>
            <person name="Yang J."/>
            <person name="Yang F."/>
            <person name="Zhang X."/>
            <person name="Zhang J."/>
            <person name="Yang G."/>
            <person name="Wu H."/>
            <person name="Qu D."/>
            <person name="Dong J."/>
            <person name="Sun L."/>
            <person name="Xue Y."/>
            <person name="Zhao A."/>
            <person name="Gao Y."/>
            <person name="Zhu J."/>
            <person name="Kan B."/>
            <person name="Ding K."/>
            <person name="Chen S."/>
            <person name="Cheng H."/>
            <person name="Yao Z."/>
            <person name="He B."/>
            <person name="Chen R."/>
            <person name="Ma D."/>
            <person name="Qiang B."/>
            <person name="Wen Y."/>
            <person name="Hou Y."/>
            <person name="Yu J."/>
        </authorList>
    </citation>
    <scope>NUCLEOTIDE SEQUENCE [LARGE SCALE GENOMIC DNA]</scope>
    <source>
        <strain>301 / Serotype 2a</strain>
    </source>
</reference>
<reference key="2">
    <citation type="journal article" date="2003" name="Infect. Immun.">
        <title>Complete genome sequence and comparative genomics of Shigella flexneri serotype 2a strain 2457T.</title>
        <authorList>
            <person name="Wei J."/>
            <person name="Goldberg M.B."/>
            <person name="Burland V."/>
            <person name="Venkatesan M.M."/>
            <person name="Deng W."/>
            <person name="Fournier G."/>
            <person name="Mayhew G.F."/>
            <person name="Plunkett G. III"/>
            <person name="Rose D.J."/>
            <person name="Darling A."/>
            <person name="Mau B."/>
            <person name="Perna N.T."/>
            <person name="Payne S.M."/>
            <person name="Runyen-Janecky L.J."/>
            <person name="Zhou S."/>
            <person name="Schwartz D.C."/>
            <person name="Blattner F.R."/>
        </authorList>
    </citation>
    <scope>NUCLEOTIDE SEQUENCE [LARGE SCALE GENOMIC DNA]</scope>
    <source>
        <strain>ATCC 700930 / 2457T / Serotype 2a</strain>
    </source>
</reference>
<name>YBIX_SHIFL</name>